<evidence type="ECO:0000255" key="1">
    <source>
        <dbReference type="HAMAP-Rule" id="MF_00019"/>
    </source>
</evidence>
<reference key="1">
    <citation type="journal article" date="2009" name="J. Bacteriol.">
        <title>Genome sequences of three Agrobacterium biovars help elucidate the evolution of multichromosome genomes in bacteria.</title>
        <authorList>
            <person name="Slater S.C."/>
            <person name="Goldman B.S."/>
            <person name="Goodner B."/>
            <person name="Setubal J.C."/>
            <person name="Farrand S.K."/>
            <person name="Nester E.W."/>
            <person name="Burr T.J."/>
            <person name="Banta L."/>
            <person name="Dickerman A.W."/>
            <person name="Paulsen I."/>
            <person name="Otten L."/>
            <person name="Suen G."/>
            <person name="Welch R."/>
            <person name="Almeida N.F."/>
            <person name="Arnold F."/>
            <person name="Burton O.T."/>
            <person name="Du Z."/>
            <person name="Ewing A."/>
            <person name="Godsy E."/>
            <person name="Heisel S."/>
            <person name="Houmiel K.L."/>
            <person name="Jhaveri J."/>
            <person name="Lu J."/>
            <person name="Miller N.M."/>
            <person name="Norton S."/>
            <person name="Chen Q."/>
            <person name="Phoolcharoen W."/>
            <person name="Ohlin V."/>
            <person name="Ondrusek D."/>
            <person name="Pride N."/>
            <person name="Stricklin S.L."/>
            <person name="Sun J."/>
            <person name="Wheeler C."/>
            <person name="Wilson L."/>
            <person name="Zhu H."/>
            <person name="Wood D.W."/>
        </authorList>
    </citation>
    <scope>NUCLEOTIDE SEQUENCE [LARGE SCALE GENOMIC DNA]</scope>
    <source>
        <strain>K84 / ATCC BAA-868</strain>
    </source>
</reference>
<gene>
    <name evidence="1" type="primary">plsX</name>
    <name type="ordered locus">Arad_1770</name>
</gene>
<dbReference type="EC" id="2.3.1.274" evidence="1"/>
<dbReference type="EMBL" id="CP000628">
    <property type="protein sequence ID" value="ACM26125.1"/>
    <property type="molecule type" value="Genomic_DNA"/>
</dbReference>
<dbReference type="RefSeq" id="WP_007692776.1">
    <property type="nucleotide sequence ID" value="NC_011985.1"/>
</dbReference>
<dbReference type="SMR" id="B9JCY8"/>
<dbReference type="STRING" id="311403.Arad_1770"/>
<dbReference type="GeneID" id="86848003"/>
<dbReference type="KEGG" id="ara:Arad_1770"/>
<dbReference type="eggNOG" id="COG0416">
    <property type="taxonomic scope" value="Bacteria"/>
</dbReference>
<dbReference type="HOGENOM" id="CLU_039379_1_0_5"/>
<dbReference type="UniPathway" id="UPA00085"/>
<dbReference type="Proteomes" id="UP000001600">
    <property type="component" value="Chromosome 1"/>
</dbReference>
<dbReference type="GO" id="GO:0005737">
    <property type="term" value="C:cytoplasm"/>
    <property type="evidence" value="ECO:0007669"/>
    <property type="project" value="UniProtKB-SubCell"/>
</dbReference>
<dbReference type="GO" id="GO:0043811">
    <property type="term" value="F:phosphate:acyl-[acyl carrier protein] acyltransferase activity"/>
    <property type="evidence" value="ECO:0007669"/>
    <property type="project" value="UniProtKB-UniRule"/>
</dbReference>
<dbReference type="GO" id="GO:0006633">
    <property type="term" value="P:fatty acid biosynthetic process"/>
    <property type="evidence" value="ECO:0007669"/>
    <property type="project" value="UniProtKB-UniRule"/>
</dbReference>
<dbReference type="GO" id="GO:0008654">
    <property type="term" value="P:phospholipid biosynthetic process"/>
    <property type="evidence" value="ECO:0007669"/>
    <property type="project" value="UniProtKB-KW"/>
</dbReference>
<dbReference type="Gene3D" id="3.40.718.10">
    <property type="entry name" value="Isopropylmalate Dehydrogenase"/>
    <property type="match status" value="1"/>
</dbReference>
<dbReference type="HAMAP" id="MF_00019">
    <property type="entry name" value="PlsX"/>
    <property type="match status" value="1"/>
</dbReference>
<dbReference type="InterPro" id="IPR003664">
    <property type="entry name" value="FA_synthesis"/>
</dbReference>
<dbReference type="InterPro" id="IPR012281">
    <property type="entry name" value="Phospholipid_synth_PlsX-like"/>
</dbReference>
<dbReference type="NCBIfam" id="TIGR00182">
    <property type="entry name" value="plsX"/>
    <property type="match status" value="1"/>
</dbReference>
<dbReference type="PANTHER" id="PTHR30100">
    <property type="entry name" value="FATTY ACID/PHOSPHOLIPID SYNTHESIS PROTEIN PLSX"/>
    <property type="match status" value="1"/>
</dbReference>
<dbReference type="PANTHER" id="PTHR30100:SF1">
    <property type="entry name" value="PHOSPHATE ACYLTRANSFERASE"/>
    <property type="match status" value="1"/>
</dbReference>
<dbReference type="Pfam" id="PF02504">
    <property type="entry name" value="FA_synthesis"/>
    <property type="match status" value="1"/>
</dbReference>
<dbReference type="PIRSF" id="PIRSF002465">
    <property type="entry name" value="Phsphlp_syn_PlsX"/>
    <property type="match status" value="1"/>
</dbReference>
<dbReference type="SUPFAM" id="SSF53659">
    <property type="entry name" value="Isocitrate/Isopropylmalate dehydrogenase-like"/>
    <property type="match status" value="1"/>
</dbReference>
<proteinExistence type="inferred from homology"/>
<comment type="function">
    <text evidence="1">Catalyzes the reversible formation of acyl-phosphate (acyl-PO(4)) from acyl-[acyl-carrier-protein] (acyl-ACP). This enzyme utilizes acyl-ACP as fatty acyl donor, but not acyl-CoA.</text>
</comment>
<comment type="catalytic activity">
    <reaction evidence="1">
        <text>a fatty acyl-[ACP] + phosphate = an acyl phosphate + holo-[ACP]</text>
        <dbReference type="Rhea" id="RHEA:42292"/>
        <dbReference type="Rhea" id="RHEA-COMP:9685"/>
        <dbReference type="Rhea" id="RHEA-COMP:14125"/>
        <dbReference type="ChEBI" id="CHEBI:43474"/>
        <dbReference type="ChEBI" id="CHEBI:59918"/>
        <dbReference type="ChEBI" id="CHEBI:64479"/>
        <dbReference type="ChEBI" id="CHEBI:138651"/>
        <dbReference type="EC" id="2.3.1.274"/>
    </reaction>
</comment>
<comment type="pathway">
    <text evidence="1">Lipid metabolism; phospholipid metabolism.</text>
</comment>
<comment type="subunit">
    <text evidence="1">Homodimer. Probably interacts with PlsY.</text>
</comment>
<comment type="subcellular location">
    <subcellularLocation>
        <location evidence="1">Cytoplasm</location>
    </subcellularLocation>
    <text evidence="1">Associated with the membrane possibly through PlsY.</text>
</comment>
<comment type="similarity">
    <text evidence="1">Belongs to the PlsX family.</text>
</comment>
<name>PLSX_RHIR8</name>
<protein>
    <recommendedName>
        <fullName evidence="1">Phosphate acyltransferase</fullName>
        <ecNumber evidence="1">2.3.1.274</ecNumber>
    </recommendedName>
    <alternativeName>
        <fullName evidence="1">Acyl-ACP phosphotransacylase</fullName>
    </alternativeName>
    <alternativeName>
        <fullName evidence="1">Acyl-[acyl-carrier-protein]--phosphate acyltransferase</fullName>
    </alternativeName>
    <alternativeName>
        <fullName evidence="1">Phosphate-acyl-ACP acyltransferase</fullName>
    </alternativeName>
</protein>
<feature type="chain" id="PRO_1000193119" description="Phosphate acyltransferase">
    <location>
        <begin position="1"/>
        <end position="348"/>
    </location>
</feature>
<keyword id="KW-0963">Cytoplasm</keyword>
<keyword id="KW-0444">Lipid biosynthesis</keyword>
<keyword id="KW-0443">Lipid metabolism</keyword>
<keyword id="KW-0594">Phospholipid biosynthesis</keyword>
<keyword id="KW-1208">Phospholipid metabolism</keyword>
<keyword id="KW-0808">Transferase</keyword>
<accession>B9JCY8</accession>
<sequence length="348" mass="37407">MIRISLDLMGGDFGPEVVIPGAAKALERHPDITFIMYGMKDRCEPILGKYAKLREKSVFHECDVSISMDEKPSQALRRGRYVSSMWRSIEAVKLGEADVVVSAGNTGALMAMAKFCLRTMANIERPAIAAIWPTLRGESIVLDVGATIGADSQQLLDFALMGGAMARALFEIERPTIGLLNVGVEEIKGQEDVKEAGRLIREANLESLEYSGFVEGDDIGKGTVDVVVTEGFSGNIALKAAEGTAKQIGAYLRSAMTRTLLARIGYLFAKGAFDLLREKLDPSKVNGGVFLGLNGIVIKSHGGASAEAFAAAIDVGYDMAKNGLTQKIENDLKRYHAKRQPPIGPEAA</sequence>
<organism>
    <name type="scientific">Rhizobium rhizogenes (strain K84 / ATCC BAA-868)</name>
    <name type="common">Agrobacterium radiobacter</name>
    <dbReference type="NCBI Taxonomy" id="311403"/>
    <lineage>
        <taxon>Bacteria</taxon>
        <taxon>Pseudomonadati</taxon>
        <taxon>Pseudomonadota</taxon>
        <taxon>Alphaproteobacteria</taxon>
        <taxon>Hyphomicrobiales</taxon>
        <taxon>Rhizobiaceae</taxon>
        <taxon>Rhizobium/Agrobacterium group</taxon>
        <taxon>Rhizobium</taxon>
    </lineage>
</organism>